<reference key="1">
    <citation type="submission" date="2008-03" db="EMBL/GenBank/DDBJ databases">
        <title>Complete sequence of chromosome of Methylobacterium radiotolerans JCM 2831.</title>
        <authorList>
            <consortium name="US DOE Joint Genome Institute"/>
            <person name="Copeland A."/>
            <person name="Lucas S."/>
            <person name="Lapidus A."/>
            <person name="Glavina del Rio T."/>
            <person name="Dalin E."/>
            <person name="Tice H."/>
            <person name="Bruce D."/>
            <person name="Goodwin L."/>
            <person name="Pitluck S."/>
            <person name="Kiss H."/>
            <person name="Brettin T."/>
            <person name="Detter J.C."/>
            <person name="Han C."/>
            <person name="Kuske C.R."/>
            <person name="Schmutz J."/>
            <person name="Larimer F."/>
            <person name="Land M."/>
            <person name="Hauser L."/>
            <person name="Kyrpides N."/>
            <person name="Mikhailova N."/>
            <person name="Marx C.J."/>
            <person name="Richardson P."/>
        </authorList>
    </citation>
    <scope>NUCLEOTIDE SEQUENCE [LARGE SCALE GENOMIC DNA]</scope>
    <source>
        <strain>ATCC 27329 / DSM 1819 / JCM 2831 / NBRC 15690 / NCIMB 10815 / 0-1</strain>
    </source>
</reference>
<keyword id="KW-0963">Cytoplasm</keyword>
<keyword id="KW-0342">GTP-binding</keyword>
<keyword id="KW-0378">Hydrolase</keyword>
<keyword id="KW-0460">Magnesium</keyword>
<keyword id="KW-0479">Metal-binding</keyword>
<keyword id="KW-0547">Nucleotide-binding</keyword>
<keyword id="KW-0630">Potassium</keyword>
<keyword id="KW-0819">tRNA processing</keyword>
<feature type="chain" id="PRO_0000345833" description="tRNA modification GTPase MnmE">
    <location>
        <begin position="1"/>
        <end position="441"/>
    </location>
</feature>
<feature type="domain" description="TrmE-type G">
    <location>
        <begin position="219"/>
        <end position="366"/>
    </location>
</feature>
<feature type="binding site" evidence="1">
    <location>
        <position position="23"/>
    </location>
    <ligand>
        <name>(6S)-5-formyl-5,6,7,8-tetrahydrofolate</name>
        <dbReference type="ChEBI" id="CHEBI:57457"/>
    </ligand>
</feature>
<feature type="binding site" evidence="1">
    <location>
        <position position="81"/>
    </location>
    <ligand>
        <name>(6S)-5-formyl-5,6,7,8-tetrahydrofolate</name>
        <dbReference type="ChEBI" id="CHEBI:57457"/>
    </ligand>
</feature>
<feature type="binding site" evidence="1">
    <location>
        <position position="121"/>
    </location>
    <ligand>
        <name>(6S)-5-formyl-5,6,7,8-tetrahydrofolate</name>
        <dbReference type="ChEBI" id="CHEBI:57457"/>
    </ligand>
</feature>
<feature type="binding site" evidence="1">
    <location>
        <begin position="229"/>
        <end position="234"/>
    </location>
    <ligand>
        <name>GTP</name>
        <dbReference type="ChEBI" id="CHEBI:37565"/>
    </ligand>
</feature>
<feature type="binding site" evidence="1">
    <location>
        <position position="233"/>
    </location>
    <ligand>
        <name>Mg(2+)</name>
        <dbReference type="ChEBI" id="CHEBI:18420"/>
    </ligand>
</feature>
<feature type="binding site" evidence="1">
    <location>
        <begin position="248"/>
        <end position="254"/>
    </location>
    <ligand>
        <name>GTP</name>
        <dbReference type="ChEBI" id="CHEBI:37565"/>
    </ligand>
</feature>
<feature type="binding site" evidence="1">
    <location>
        <position position="254"/>
    </location>
    <ligand>
        <name>Mg(2+)</name>
        <dbReference type="ChEBI" id="CHEBI:18420"/>
    </ligand>
</feature>
<feature type="binding site" evidence="1">
    <location>
        <begin position="273"/>
        <end position="276"/>
    </location>
    <ligand>
        <name>GTP</name>
        <dbReference type="ChEBI" id="CHEBI:37565"/>
    </ligand>
</feature>
<feature type="binding site" evidence="1">
    <location>
        <position position="441"/>
    </location>
    <ligand>
        <name>(6S)-5-formyl-5,6,7,8-tetrahydrofolate</name>
        <dbReference type="ChEBI" id="CHEBI:57457"/>
    </ligand>
</feature>
<sequence>MNETDTLFAPASGFGRAAVAVIRISGPAAGGVLATLGGRLPTPRRLSLRSLRDPRDGTELDRALVAWFPGPDTYSGEDMAELHLHGGAAVRMRVLATLARLPGCRAAEPGAFTRRAVLNGRMDLAEAEAVADLIDAETEGQRRQALRQLDGALSRQVAAWRAEAIDCLAAAEAALDFADEGDVDDAGLDAALFDRAARLRDAVAATLRDGHRGERLREGFTVVLAGAPNSGKSTLLNALSRRDVAIVSDSPGTTRDAIEVRLDLGGLPVLLVDTAGLRETAEPIEAQGIVRTRARIDTADLVVALVPPGGAVPDLGPGCRPILIVRTKADLFAGSQPAGDSADVTVSAHTGAGMDDLLDAIQAAAEDGLGTGDALITRARHRAALEACVAHLDRVSGSAGGLPELAAEDLRLAVRALGEVAGHVGVEDVLDRLFSGFCIGK</sequence>
<gene>
    <name evidence="1" type="primary">mnmE</name>
    <name evidence="1" type="synonym">trmE</name>
    <name type="ordered locus">Mrad2831_4081</name>
</gene>
<protein>
    <recommendedName>
        <fullName evidence="1">tRNA modification GTPase MnmE</fullName>
        <ecNumber evidence="1">3.6.-.-</ecNumber>
    </recommendedName>
</protein>
<dbReference type="EC" id="3.6.-.-" evidence="1"/>
<dbReference type="EMBL" id="CP001001">
    <property type="protein sequence ID" value="ACB26051.1"/>
    <property type="molecule type" value="Genomic_DNA"/>
</dbReference>
<dbReference type="RefSeq" id="WP_012321007.1">
    <property type="nucleotide sequence ID" value="NC_010505.1"/>
</dbReference>
<dbReference type="SMR" id="B1M0E0"/>
<dbReference type="STRING" id="426355.Mrad2831_4081"/>
<dbReference type="GeneID" id="6140139"/>
<dbReference type="KEGG" id="mrd:Mrad2831_4081"/>
<dbReference type="PATRIC" id="fig|426355.14.peg.4174"/>
<dbReference type="eggNOG" id="COG0486">
    <property type="taxonomic scope" value="Bacteria"/>
</dbReference>
<dbReference type="HOGENOM" id="CLU_019624_3_1_5"/>
<dbReference type="OrthoDB" id="9805918at2"/>
<dbReference type="Proteomes" id="UP000006589">
    <property type="component" value="Chromosome"/>
</dbReference>
<dbReference type="GO" id="GO:0005737">
    <property type="term" value="C:cytoplasm"/>
    <property type="evidence" value="ECO:0007669"/>
    <property type="project" value="UniProtKB-SubCell"/>
</dbReference>
<dbReference type="GO" id="GO:0005525">
    <property type="term" value="F:GTP binding"/>
    <property type="evidence" value="ECO:0007669"/>
    <property type="project" value="UniProtKB-UniRule"/>
</dbReference>
<dbReference type="GO" id="GO:0003924">
    <property type="term" value="F:GTPase activity"/>
    <property type="evidence" value="ECO:0007669"/>
    <property type="project" value="UniProtKB-UniRule"/>
</dbReference>
<dbReference type="GO" id="GO:0046872">
    <property type="term" value="F:metal ion binding"/>
    <property type="evidence" value="ECO:0007669"/>
    <property type="project" value="UniProtKB-KW"/>
</dbReference>
<dbReference type="GO" id="GO:0030488">
    <property type="term" value="P:tRNA methylation"/>
    <property type="evidence" value="ECO:0007669"/>
    <property type="project" value="TreeGrafter"/>
</dbReference>
<dbReference type="GO" id="GO:0002098">
    <property type="term" value="P:tRNA wobble uridine modification"/>
    <property type="evidence" value="ECO:0007669"/>
    <property type="project" value="TreeGrafter"/>
</dbReference>
<dbReference type="CDD" id="cd04164">
    <property type="entry name" value="trmE"/>
    <property type="match status" value="1"/>
</dbReference>
<dbReference type="CDD" id="cd14858">
    <property type="entry name" value="TrmE_N"/>
    <property type="match status" value="1"/>
</dbReference>
<dbReference type="FunFam" id="3.30.1360.120:FF:000007">
    <property type="entry name" value="tRNA modification GTPase GTPBP3, mitochondrial"/>
    <property type="match status" value="1"/>
</dbReference>
<dbReference type="Gene3D" id="3.40.50.300">
    <property type="entry name" value="P-loop containing nucleotide triphosphate hydrolases"/>
    <property type="match status" value="1"/>
</dbReference>
<dbReference type="Gene3D" id="3.30.1360.120">
    <property type="entry name" value="Probable tRNA modification gtpase trme, domain 1"/>
    <property type="match status" value="1"/>
</dbReference>
<dbReference type="Gene3D" id="1.20.120.430">
    <property type="entry name" value="tRNA modification GTPase MnmE domain 2"/>
    <property type="match status" value="1"/>
</dbReference>
<dbReference type="HAMAP" id="MF_00379">
    <property type="entry name" value="GTPase_MnmE"/>
    <property type="match status" value="1"/>
</dbReference>
<dbReference type="InterPro" id="IPR031168">
    <property type="entry name" value="G_TrmE"/>
</dbReference>
<dbReference type="InterPro" id="IPR006073">
    <property type="entry name" value="GTP-bd"/>
</dbReference>
<dbReference type="InterPro" id="IPR018948">
    <property type="entry name" value="GTP-bd_TrmE_N"/>
</dbReference>
<dbReference type="InterPro" id="IPR004520">
    <property type="entry name" value="GTPase_MnmE"/>
</dbReference>
<dbReference type="InterPro" id="IPR027368">
    <property type="entry name" value="MnmE_dom2"/>
</dbReference>
<dbReference type="InterPro" id="IPR025867">
    <property type="entry name" value="MnmE_helical"/>
</dbReference>
<dbReference type="InterPro" id="IPR027417">
    <property type="entry name" value="P-loop_NTPase"/>
</dbReference>
<dbReference type="InterPro" id="IPR005225">
    <property type="entry name" value="Small_GTP-bd"/>
</dbReference>
<dbReference type="InterPro" id="IPR027266">
    <property type="entry name" value="TrmE/GcvT_dom1"/>
</dbReference>
<dbReference type="NCBIfam" id="TIGR00450">
    <property type="entry name" value="mnmE_trmE_thdF"/>
    <property type="match status" value="1"/>
</dbReference>
<dbReference type="NCBIfam" id="NF003661">
    <property type="entry name" value="PRK05291.1-3"/>
    <property type="match status" value="1"/>
</dbReference>
<dbReference type="NCBIfam" id="TIGR00231">
    <property type="entry name" value="small_GTP"/>
    <property type="match status" value="1"/>
</dbReference>
<dbReference type="PANTHER" id="PTHR42714">
    <property type="entry name" value="TRNA MODIFICATION GTPASE GTPBP3"/>
    <property type="match status" value="1"/>
</dbReference>
<dbReference type="PANTHER" id="PTHR42714:SF2">
    <property type="entry name" value="TRNA MODIFICATION GTPASE GTPBP3, MITOCHONDRIAL"/>
    <property type="match status" value="1"/>
</dbReference>
<dbReference type="Pfam" id="PF01926">
    <property type="entry name" value="MMR_HSR1"/>
    <property type="match status" value="1"/>
</dbReference>
<dbReference type="Pfam" id="PF12631">
    <property type="entry name" value="MnmE_helical"/>
    <property type="match status" value="1"/>
</dbReference>
<dbReference type="Pfam" id="PF10396">
    <property type="entry name" value="TrmE_N"/>
    <property type="match status" value="1"/>
</dbReference>
<dbReference type="PRINTS" id="PR00326">
    <property type="entry name" value="GTP1OBG"/>
</dbReference>
<dbReference type="SUPFAM" id="SSF52540">
    <property type="entry name" value="P-loop containing nucleoside triphosphate hydrolases"/>
    <property type="match status" value="1"/>
</dbReference>
<dbReference type="SUPFAM" id="SSF116878">
    <property type="entry name" value="TrmE connector domain"/>
    <property type="match status" value="1"/>
</dbReference>
<dbReference type="PROSITE" id="PS51709">
    <property type="entry name" value="G_TRME"/>
    <property type="match status" value="1"/>
</dbReference>
<organism>
    <name type="scientific">Methylobacterium radiotolerans (strain ATCC 27329 / DSM 1819 / JCM 2831 / NBRC 15690 / NCIMB 10815 / 0-1)</name>
    <dbReference type="NCBI Taxonomy" id="426355"/>
    <lineage>
        <taxon>Bacteria</taxon>
        <taxon>Pseudomonadati</taxon>
        <taxon>Pseudomonadota</taxon>
        <taxon>Alphaproteobacteria</taxon>
        <taxon>Hyphomicrobiales</taxon>
        <taxon>Methylobacteriaceae</taxon>
        <taxon>Methylobacterium</taxon>
    </lineage>
</organism>
<accession>B1M0E0</accession>
<comment type="function">
    <text evidence="1">Exhibits a very high intrinsic GTPase hydrolysis rate. Involved in the addition of a carboxymethylaminomethyl (cmnm) group at the wobble position (U34) of certain tRNAs, forming tRNA-cmnm(5)s(2)U34.</text>
</comment>
<comment type="cofactor">
    <cofactor evidence="1">
        <name>K(+)</name>
        <dbReference type="ChEBI" id="CHEBI:29103"/>
    </cofactor>
    <text evidence="1">Binds 1 potassium ion per subunit.</text>
</comment>
<comment type="subunit">
    <text evidence="1">Homodimer. Heterotetramer of two MnmE and two MnmG subunits.</text>
</comment>
<comment type="subcellular location">
    <subcellularLocation>
        <location evidence="1">Cytoplasm</location>
    </subcellularLocation>
</comment>
<comment type="similarity">
    <text evidence="1">Belongs to the TRAFAC class TrmE-Era-EngA-EngB-Septin-like GTPase superfamily. TrmE GTPase family.</text>
</comment>
<proteinExistence type="inferred from homology"/>
<name>MNME_METRJ</name>
<evidence type="ECO:0000255" key="1">
    <source>
        <dbReference type="HAMAP-Rule" id="MF_00379"/>
    </source>
</evidence>